<sequence length="793" mass="86803">MRIGVYVCHCGLNIAGVIDVSALEEMAGELEDVVLAREVQFLCSDSGQEGIIKDIKDNKIDRVVIAACSPRLHEKTFRHVMEKADLNPYLMEMVNIREQCSWVHADDPQMATQKAFDLIRMGVAKARFLRELSATSSKASRNVLIIGGGVAGIEAALNLAEAGFPVTMVERESTIGGKMALMNEVFPTNDCSICVLAPKMTEVQNHPNITLYTYSEVTDISGSVGKFHVRVTRKPRFVLEDKCKGCVDLCSEVCPVEIENPMNYGIGKSRAIYMPIPQSVPQVVLIDPDHCVGCGLCQLACPAEAVDYEQKPEEIEFEAGAVIVSTGYQLFDASRKKEYGFGKYPDVITNMQLERMLNSAGPTGGRVLVPSTGQPPESVAFIQCVGSRDKTVGNEHCSRVCCMAALKNSQMVKERYPGTDITIHYIDIRAAGEMYEEYYARTQGMGVDFIRGKVAEVYAGEDGRPVVRYENTLESRVEEEAHDLVVLSTGYEPSKAAEGIGRMLNLARRPDRFFASAHPKMRPVDAPVSGVFLAGCASGPKEIQVSIAQGSACASKVMQLLGTGELEADPMGAHVDPDKCIGCRTCVEVCKFGKISIVDKKAVVDEVSCYGCGDCSAACPVGAIQMRNFENEQILAQVRAATAHKSQCPFVVAFLCNWCSYACADLTGMSRIHYPTNIRVIRTMCSARINPEFVLEALKGGADGVLVAGCRMDECHYIHGNFDAKKRMDVLKEIIKEIGLDPKRLRTLWISAAEGERFSNTITEFVKELEEIGPIGSELKREYTATGLEEVAK</sequence>
<feature type="chain" id="PRO_0000150060" description="Ferredoxin:CoB-CoM heterodisulfide reductase subunit A">
    <location>
        <begin position="1"/>
        <end position="793"/>
    </location>
</feature>
<feature type="domain" description="4Fe-4S ferredoxin-type 1" evidence="4">
    <location>
        <begin position="233"/>
        <end position="264"/>
    </location>
</feature>
<feature type="domain" description="4Fe-4S ferredoxin-type 2" evidence="4">
    <location>
        <begin position="282"/>
        <end position="311"/>
    </location>
</feature>
<feature type="domain" description="4Fe-4S ferredoxin-type 3" evidence="4">
    <location>
        <begin position="571"/>
        <end position="600"/>
    </location>
</feature>
<feature type="domain" description="4Fe-4S ferredoxin-type 4" evidence="4">
    <location>
        <begin position="601"/>
        <end position="629"/>
    </location>
</feature>
<feature type="binding site" evidence="3">
    <location>
        <begin position="147"/>
        <end position="170"/>
    </location>
    <ligand>
        <name>FAD</name>
        <dbReference type="ChEBI" id="CHEBI:57692"/>
    </ligand>
</feature>
<feature type="binding site" evidence="4">
    <location>
        <position position="243"/>
    </location>
    <ligand>
        <name>[4Fe-4S] cluster</name>
        <dbReference type="ChEBI" id="CHEBI:49883"/>
        <label>1</label>
    </ligand>
</feature>
<feature type="binding site" evidence="4">
    <location>
        <position position="246"/>
    </location>
    <ligand>
        <name>[4Fe-4S] cluster</name>
        <dbReference type="ChEBI" id="CHEBI:49883"/>
        <label>1</label>
    </ligand>
</feature>
<feature type="binding site" evidence="4">
    <location>
        <position position="250"/>
    </location>
    <ligand>
        <name>[4Fe-4S] cluster</name>
        <dbReference type="ChEBI" id="CHEBI:49883"/>
        <label>1</label>
    </ligand>
</feature>
<feature type="binding site" evidence="4">
    <location>
        <position position="254"/>
    </location>
    <ligand>
        <name>[4Fe-4S] cluster</name>
        <dbReference type="ChEBI" id="CHEBI:49883"/>
        <label>2</label>
    </ligand>
</feature>
<feature type="binding site" evidence="4">
    <location>
        <position position="291"/>
    </location>
    <ligand>
        <name>[4Fe-4S] cluster</name>
        <dbReference type="ChEBI" id="CHEBI:49883"/>
        <label>2</label>
    </ligand>
</feature>
<feature type="binding site" evidence="4">
    <location>
        <position position="294"/>
    </location>
    <ligand>
        <name>[4Fe-4S] cluster</name>
        <dbReference type="ChEBI" id="CHEBI:49883"/>
        <label>2</label>
    </ligand>
</feature>
<feature type="binding site" evidence="4">
    <location>
        <position position="297"/>
    </location>
    <ligand>
        <name>[4Fe-4S] cluster</name>
        <dbReference type="ChEBI" id="CHEBI:49883"/>
        <label>2</label>
    </ligand>
</feature>
<feature type="binding site" evidence="4">
    <location>
        <position position="301"/>
    </location>
    <ligand>
        <name>[4Fe-4S] cluster</name>
        <dbReference type="ChEBI" id="CHEBI:49883"/>
        <label>1</label>
    </ligand>
</feature>
<feature type="binding site" evidence="4">
    <location>
        <position position="580"/>
    </location>
    <ligand>
        <name>[4Fe-4S] cluster</name>
        <dbReference type="ChEBI" id="CHEBI:49883"/>
        <label>3</label>
    </ligand>
</feature>
<feature type="binding site" evidence="4">
    <location>
        <position position="583"/>
    </location>
    <ligand>
        <name>[4Fe-4S] cluster</name>
        <dbReference type="ChEBI" id="CHEBI:49883"/>
        <label>3</label>
    </ligand>
</feature>
<feature type="binding site" evidence="4">
    <location>
        <position position="586"/>
    </location>
    <ligand>
        <name>[4Fe-4S] cluster</name>
        <dbReference type="ChEBI" id="CHEBI:49883"/>
        <label>3</label>
    </ligand>
</feature>
<feature type="binding site" evidence="4">
    <location>
        <position position="590"/>
    </location>
    <ligand>
        <name>[4Fe-4S] cluster</name>
        <dbReference type="ChEBI" id="CHEBI:49883"/>
        <label>4</label>
    </ligand>
</feature>
<feature type="binding site" evidence="4">
    <location>
        <position position="609"/>
    </location>
    <ligand>
        <name>[4Fe-4S] cluster</name>
        <dbReference type="ChEBI" id="CHEBI:49883"/>
        <label>4</label>
    </ligand>
</feature>
<feature type="binding site" evidence="4">
    <location>
        <position position="612"/>
    </location>
    <ligand>
        <name>[4Fe-4S] cluster</name>
        <dbReference type="ChEBI" id="CHEBI:49883"/>
        <label>4</label>
    </ligand>
</feature>
<feature type="binding site" evidence="4">
    <location>
        <position position="615"/>
    </location>
    <ligand>
        <name>[4Fe-4S] cluster</name>
        <dbReference type="ChEBI" id="CHEBI:49883"/>
        <label>4</label>
    </ligand>
</feature>
<feature type="binding site" evidence="4">
    <location>
        <position position="619"/>
    </location>
    <ligand>
        <name>[4Fe-4S] cluster</name>
        <dbReference type="ChEBI" id="CHEBI:49883"/>
        <label>3</label>
    </ligand>
</feature>
<organism>
    <name type="scientific">Methanosarcina mazei (strain ATCC BAA-159 / DSM 3647 / Goe1 / Go1 / JCM 11833 / OCM 88)</name>
    <name type="common">Methanosarcina frisia</name>
    <dbReference type="NCBI Taxonomy" id="192952"/>
    <lineage>
        <taxon>Archaea</taxon>
        <taxon>Methanobacteriati</taxon>
        <taxon>Methanobacteriota</taxon>
        <taxon>Stenosarchaea group</taxon>
        <taxon>Methanomicrobia</taxon>
        <taxon>Methanosarcinales</taxon>
        <taxon>Methanosarcinaceae</taxon>
        <taxon>Methanosarcina</taxon>
    </lineage>
</organism>
<name>HDRA_METMA</name>
<reference key="1">
    <citation type="journal article" date="2002" name="J. Mol. Microbiol. Biotechnol.">
        <title>The genome of Methanosarcina mazei: evidence for lateral gene transfer between Bacteria and Archaea.</title>
        <authorList>
            <person name="Deppenmeier U."/>
            <person name="Johann A."/>
            <person name="Hartsch T."/>
            <person name="Merkl R."/>
            <person name="Schmitz R.A."/>
            <person name="Martinez-Arias R."/>
            <person name="Henne A."/>
            <person name="Wiezer A."/>
            <person name="Baeumer S."/>
            <person name="Jacobi C."/>
            <person name="Brueggemann H."/>
            <person name="Lienard T."/>
            <person name="Christmann A."/>
            <person name="Boemecke M."/>
            <person name="Steckel S."/>
            <person name="Bhattacharyya A."/>
            <person name="Lykidis A."/>
            <person name="Overbeek R."/>
            <person name="Klenk H.-P."/>
            <person name="Gunsalus R.P."/>
            <person name="Fritz H.-J."/>
            <person name="Gottschalk G."/>
        </authorList>
    </citation>
    <scope>NUCLEOTIDE SEQUENCE [LARGE SCALE GENOMIC DNA]</scope>
    <source>
        <strain>ATCC BAA-159 / DSM 3647 / Goe1 / Go1 / JCM 11833 / OCM 88</strain>
    </source>
</reference>
<protein>
    <recommendedName>
        <fullName evidence="1">Ferredoxin:CoB-CoM heterodisulfide reductase subunit A</fullName>
        <ecNumber evidence="1">1.8.7.3</ecNumber>
    </recommendedName>
</protein>
<accession>Q8Q0T0</accession>
<keyword id="KW-0004">4Fe-4S</keyword>
<keyword id="KW-0963">Cytoplasm</keyword>
<keyword id="KW-0274">FAD</keyword>
<keyword id="KW-0285">Flavoprotein</keyword>
<keyword id="KW-0408">Iron</keyword>
<keyword id="KW-0411">Iron-sulfur</keyword>
<keyword id="KW-0479">Metal-binding</keyword>
<keyword id="KW-0484">Methanogenesis</keyword>
<keyword id="KW-0560">Oxidoreductase</keyword>
<keyword id="KW-0677">Repeat</keyword>
<comment type="function">
    <text evidence="1">Part of a complex that catalyzes the reversible reduction of CoM-S-S-CoB to the thiol-coenzymes H-S-CoM (coenzyme M) and H-S-CoB (coenzyme B).</text>
</comment>
<comment type="catalytic activity">
    <reaction evidence="1">
        <text>coenzyme B + coenzyme M + 2 oxidized [2Fe-2S]-[ferredoxin] = coenzyme M-coenzyme B heterodisulfide + 2 reduced [2Fe-2S]-[ferredoxin] + 2 H(+)</text>
        <dbReference type="Rhea" id="RHEA:55160"/>
        <dbReference type="Rhea" id="RHEA-COMP:10000"/>
        <dbReference type="Rhea" id="RHEA-COMP:10001"/>
        <dbReference type="ChEBI" id="CHEBI:15378"/>
        <dbReference type="ChEBI" id="CHEBI:33737"/>
        <dbReference type="ChEBI" id="CHEBI:33738"/>
        <dbReference type="ChEBI" id="CHEBI:58319"/>
        <dbReference type="ChEBI" id="CHEBI:58411"/>
        <dbReference type="ChEBI" id="CHEBI:58596"/>
        <dbReference type="EC" id="1.8.7.3"/>
    </reaction>
</comment>
<comment type="cofactor">
    <cofactor evidence="4">
        <name>[4Fe-4S] cluster</name>
        <dbReference type="ChEBI" id="CHEBI:49883"/>
    </cofactor>
    <text evidence="4">Binds 4 [4Fe-4S] cluster.</text>
</comment>
<comment type="cofactor">
    <cofactor evidence="2">
        <name>FAD</name>
        <dbReference type="ChEBI" id="CHEBI:57692"/>
    </cofactor>
</comment>
<comment type="pathway">
    <text evidence="1">Cofactor metabolism; coenzyme M-coenzyme B heterodisulfide reduction; coenzyme B and coenzyme M from coenzyme M-coenzyme B heterodisulfide: step 1/1.</text>
</comment>
<comment type="subunit">
    <text evidence="1">The ferredoxin:CoB-CoM heterodisulfide reductase is composed of three subunits; HdrA, HdrB and HdrC.</text>
</comment>
<comment type="subcellular location">
    <subcellularLocation>
        <location evidence="1">Cytoplasm</location>
    </subcellularLocation>
</comment>
<comment type="similarity">
    <text evidence="5">Belongs to the HdrA family.</text>
</comment>
<gene>
    <name type="primary">hdrA</name>
    <name type="ordered locus">MM_0056</name>
</gene>
<evidence type="ECO:0000250" key="1">
    <source>
        <dbReference type="UniProtKB" id="Q8TLB0"/>
    </source>
</evidence>
<evidence type="ECO:0000250" key="2">
    <source>
        <dbReference type="UniProtKB" id="Q8TM02"/>
    </source>
</evidence>
<evidence type="ECO:0000255" key="3"/>
<evidence type="ECO:0000255" key="4">
    <source>
        <dbReference type="PROSITE-ProRule" id="PRU00711"/>
    </source>
</evidence>
<evidence type="ECO:0000305" key="5"/>
<proteinExistence type="inferred from homology"/>
<dbReference type="EC" id="1.8.7.3" evidence="1"/>
<dbReference type="EMBL" id="AE008384">
    <property type="protein sequence ID" value="AAM29752.1"/>
    <property type="molecule type" value="Genomic_DNA"/>
</dbReference>
<dbReference type="SMR" id="Q8Q0T0"/>
<dbReference type="TCDB" id="3.D.7.1.7">
    <property type="family name" value="the h2:heterodisulfide oxidoreductase (hho) family"/>
</dbReference>
<dbReference type="KEGG" id="mma:MM_0056"/>
<dbReference type="PATRIC" id="fig|192952.21.peg.69"/>
<dbReference type="eggNOG" id="arCOG02235">
    <property type="taxonomic scope" value="Archaea"/>
</dbReference>
<dbReference type="eggNOG" id="arCOG02476">
    <property type="taxonomic scope" value="Archaea"/>
</dbReference>
<dbReference type="HOGENOM" id="CLU_020302_0_0_2"/>
<dbReference type="UniPathway" id="UPA00647">
    <property type="reaction ID" value="UER00700"/>
</dbReference>
<dbReference type="Proteomes" id="UP000000595">
    <property type="component" value="Chromosome"/>
</dbReference>
<dbReference type="GO" id="GO:0005737">
    <property type="term" value="C:cytoplasm"/>
    <property type="evidence" value="ECO:0007669"/>
    <property type="project" value="UniProtKB-SubCell"/>
</dbReference>
<dbReference type="GO" id="GO:0051539">
    <property type="term" value="F:4 iron, 4 sulfur cluster binding"/>
    <property type="evidence" value="ECO:0007669"/>
    <property type="project" value="UniProtKB-KW"/>
</dbReference>
<dbReference type="GO" id="GO:0046872">
    <property type="term" value="F:metal ion binding"/>
    <property type="evidence" value="ECO:0007669"/>
    <property type="project" value="UniProtKB-KW"/>
</dbReference>
<dbReference type="GO" id="GO:0016491">
    <property type="term" value="F:oxidoreductase activity"/>
    <property type="evidence" value="ECO:0007669"/>
    <property type="project" value="UniProtKB-KW"/>
</dbReference>
<dbReference type="GO" id="GO:0015948">
    <property type="term" value="P:methanogenesis"/>
    <property type="evidence" value="ECO:0007669"/>
    <property type="project" value="UniProtKB-KW"/>
</dbReference>
<dbReference type="FunFam" id="3.40.50.720:FF:000595">
    <property type="entry name" value="CoB--CoM heterodisulfide reductase iron-sulfur subunit A"/>
    <property type="match status" value="1"/>
</dbReference>
<dbReference type="Gene3D" id="3.30.70.20">
    <property type="match status" value="3"/>
</dbReference>
<dbReference type="Gene3D" id="3.40.50.720">
    <property type="entry name" value="NAD(P)-binding Rossmann-like Domain"/>
    <property type="match status" value="1"/>
</dbReference>
<dbReference type="InterPro" id="IPR017896">
    <property type="entry name" value="4Fe4S_Fe-S-bd"/>
</dbReference>
<dbReference type="InterPro" id="IPR017900">
    <property type="entry name" value="4Fe4S_Fe_S_CS"/>
</dbReference>
<dbReference type="InterPro" id="IPR036188">
    <property type="entry name" value="FAD/NAD-bd_sf"/>
</dbReference>
<dbReference type="InterPro" id="IPR023753">
    <property type="entry name" value="FAD/NAD-binding_dom"/>
</dbReference>
<dbReference type="InterPro" id="IPR039650">
    <property type="entry name" value="HdrA-like"/>
</dbReference>
<dbReference type="InterPro" id="IPR003813">
    <property type="entry name" value="MvhD/FlpD"/>
</dbReference>
<dbReference type="NCBIfam" id="NF040770">
    <property type="entry name" value="hetero_SS_HdrA2"/>
    <property type="match status" value="1"/>
</dbReference>
<dbReference type="PANTHER" id="PTHR43498:SF1">
    <property type="entry name" value="COB--COM HETERODISULFIDE REDUCTASE IRON-SULFUR SUBUNIT A"/>
    <property type="match status" value="1"/>
</dbReference>
<dbReference type="PANTHER" id="PTHR43498">
    <property type="entry name" value="FERREDOXIN:COB-COM HETERODISULFIDE REDUCTASE SUBUNIT A"/>
    <property type="match status" value="1"/>
</dbReference>
<dbReference type="Pfam" id="PF00037">
    <property type="entry name" value="Fer4"/>
    <property type="match status" value="1"/>
</dbReference>
<dbReference type="Pfam" id="PF13187">
    <property type="entry name" value="Fer4_9"/>
    <property type="match status" value="1"/>
</dbReference>
<dbReference type="Pfam" id="PF02662">
    <property type="entry name" value="FlpD"/>
    <property type="match status" value="1"/>
</dbReference>
<dbReference type="Pfam" id="PF07992">
    <property type="entry name" value="Pyr_redox_2"/>
    <property type="match status" value="1"/>
</dbReference>
<dbReference type="SUPFAM" id="SSF54862">
    <property type="entry name" value="4Fe-4S ferredoxins"/>
    <property type="match status" value="1"/>
</dbReference>
<dbReference type="SUPFAM" id="SSF51905">
    <property type="entry name" value="FAD/NAD(P)-binding domain"/>
    <property type="match status" value="1"/>
</dbReference>
<dbReference type="PROSITE" id="PS00198">
    <property type="entry name" value="4FE4S_FER_1"/>
    <property type="match status" value="2"/>
</dbReference>
<dbReference type="PROSITE" id="PS51379">
    <property type="entry name" value="4FE4S_FER_2"/>
    <property type="match status" value="4"/>
</dbReference>